<name>GRHL3_HUMAN</name>
<comment type="function">
    <text evidence="1 3 4 5 6">Transcription factor playing important roles in primary neurulation and in the differentiation of stratified epithelia of both ectodermal and endodermal origin (By similarity). Binds directly to the consensus DNA sequence 5'-AACCGGTT-3' acting as an activator and repressor on distinct target genes (PubMed:21081122, PubMed:25347468). xhibits functional redundancy with GRHL2 in epidermal morphogenetic events and epidermal wound repair (By similarity). Exhibits functional redundancy with GRHL2 in epidermal morphogenetic events and epidermal wound repair but is essential to form the epidermal barrier with TGM3 as critical direct target gene among others. Despite being dispensable during normal epidermal homeostasis in the adulthood, is again required for barrier repair after immune-mediated epidermal damage, regulates distinct gene batteries in embryonic epidermal differentiation and adult epidermal barrier reformation after injury. Plays unique and cooperative roles with GRHL2 in establishing distinct zones of primary neurulation. Essential for spinal closure, functions cooperatively with GRHL2 in closure 2 (forebrain/midbrain boundary) and posterior neuropore closure (By similarity). Also required for proper development of the oral periderm (PubMed:24360809). No genetic interaction with GRHL3, no functional cooperativity due to diverse target gene selectivity (PubMed:21081122).</text>
</comment>
<comment type="subunit">
    <text evidence="1 3">Homodimer, also forms heterodimers with GRHL1 and GRHL2 (PubMed:12549979). Interacts with LMO4 (By similarity).</text>
</comment>
<comment type="interaction">
    <interactant intactId="EBI-8469396">
        <id>Q8TE85</id>
    </interactant>
    <interactant intactId="EBI-351098">
        <id>O14744</id>
        <label>PRMT5</label>
    </interactant>
    <organismsDiffer>false</organismsDiffer>
    <experiments>2</experiments>
</comment>
<comment type="interaction">
    <interactant intactId="EBI-8469396">
        <id>Q8TE85</id>
    </interactant>
    <interactant intactId="EBI-912440">
        <id>Q96LA8</id>
        <label>PRMT6</label>
    </interactant>
    <organismsDiffer>false</organismsDiffer>
    <experiments>2</experiments>
</comment>
<comment type="interaction">
    <interactant intactId="EBI-12827521">
        <id>Q8TE85-2</id>
    </interactant>
    <interactant intactId="EBI-769261">
        <id>Q96JC9</id>
        <label>EAF1</label>
    </interactant>
    <organismsDiffer>false</organismsDiffer>
    <experiments>3</experiments>
</comment>
<comment type="interaction">
    <interactant intactId="EBI-12827521">
        <id>Q8TE85-2</id>
    </interactant>
    <interactant intactId="EBI-744099">
        <id>Q9H0I2</id>
        <label>ENKD1</label>
    </interactant>
    <organismsDiffer>false</organismsDiffer>
    <experiments>3</experiments>
</comment>
<comment type="interaction">
    <interactant intactId="EBI-12827521">
        <id>Q8TE85-2</id>
    </interactant>
    <interactant intactId="EBI-10226430">
        <id>Q0D2K3</id>
        <label>RIPPLY1</label>
    </interactant>
    <organismsDiffer>false</organismsDiffer>
    <experiments>3</experiments>
</comment>
<comment type="subcellular location">
    <subcellularLocation>
        <location evidence="4">Nucleus</location>
    </subcellularLocation>
</comment>
<comment type="alternative products">
    <event type="alternative splicing"/>
    <isoform>
        <id>Q8TE85-1</id>
        <name>1</name>
        <sequence type="displayed"/>
    </isoform>
    <isoform>
        <id>Q8TE85-2</id>
        <name>2</name>
        <sequence type="described" ref="VSP_017645 VSP_017646"/>
    </isoform>
    <isoform>
        <id>Q8TE85-3</id>
        <name>3</name>
        <sequence type="described" ref="VSP_017644 VSP_017646"/>
    </isoform>
    <isoform>
        <id>Q8TE85-4</id>
        <name>4</name>
        <sequence type="described" ref="VSP_017643 VSP_017646"/>
    </isoform>
    <isoform>
        <id>Q8TE85-5</id>
        <name>5</name>
        <sequence type="described" ref="VSP_017646"/>
    </isoform>
</comment>
<comment type="tissue specificity">
    <text evidence="3">Expressed in brain, colon, pancreas, placenta and kidney. Isoform 1 is expressed in lung and tonsil. Isoform 2 is prostate-specific.</text>
</comment>
<comment type="disease" evidence="5">
    <disease id="DI-03278">
        <name>Van der Woude syndrome 2</name>
        <acronym>VWS2</acronym>
        <description>An autosomal dominant developmental disorder characterized by lower lip pits, cleft lip and/or cleft palate.</description>
        <dbReference type="MIM" id="606713"/>
    </disease>
    <text>The disease is caused by variants affecting the gene represented in this entry.</text>
</comment>
<comment type="miscellaneous">
    <text evidence="1">GRHL genes (GRHL1, GRHL2 and GRHL3) show a paradoxical lack of redundancy despite their extensive sequence identity in the DNA-binding and protein dimerization domains and the fact that the core consensus DNA binding sites are identical. They have related, but remarkably different functions during embryogenesis because of their differential spatiotemporal expression patterns during development.</text>
</comment>
<comment type="similarity">
    <text evidence="10">Belongs to the grh/CP2 family. Grainyhead subfamily.</text>
</comment>
<comment type="sequence caution" evidence="10">
    <conflict type="erroneous initiation">
        <sequence resource="EMBL-CDS" id="AAH36890"/>
    </conflict>
    <text>Truncated N-terminus.</text>
</comment>
<comment type="sequence caution" evidence="10">
    <conflict type="erroneous initiation">
        <sequence resource="EMBL-CDS" id="BAG37608"/>
    </conflict>
    <text>Truncated N-terminus.</text>
</comment>
<organism>
    <name type="scientific">Homo sapiens</name>
    <name type="common">Human</name>
    <dbReference type="NCBI Taxonomy" id="9606"/>
    <lineage>
        <taxon>Eukaryota</taxon>
        <taxon>Metazoa</taxon>
        <taxon>Chordata</taxon>
        <taxon>Craniata</taxon>
        <taxon>Vertebrata</taxon>
        <taxon>Euteleostomi</taxon>
        <taxon>Mammalia</taxon>
        <taxon>Eutheria</taxon>
        <taxon>Euarchontoglires</taxon>
        <taxon>Primates</taxon>
        <taxon>Haplorrhini</taxon>
        <taxon>Catarrhini</taxon>
        <taxon>Hominidae</taxon>
        <taxon>Homo</taxon>
    </lineage>
</organism>
<feature type="chain" id="PRO_0000227997" description="Grainyhead-like protein 3 homolog">
    <location>
        <begin position="1"/>
        <end position="626"/>
    </location>
</feature>
<feature type="domain" description="Grh/CP2 DB" evidence="2">
    <location>
        <begin position="226"/>
        <end position="460"/>
    </location>
</feature>
<feature type="region of interest" description="Transcription activation" evidence="3">
    <location>
        <begin position="30"/>
        <end position="95"/>
    </location>
</feature>
<feature type="splice variant" id="VSP_017643" description="In isoform 4." evidence="7">
    <location>
        <begin position="1"/>
        <end position="93"/>
    </location>
</feature>
<feature type="splice variant" id="VSP_017644" description="In isoform 3." evidence="9">
    <location>
        <begin position="1"/>
        <end position="46"/>
    </location>
</feature>
<feature type="splice variant" id="VSP_017645" description="In isoform 2." evidence="7">
    <original>MSNELD</original>
    <variation>MWMNSILPIFL</variation>
    <location>
        <begin position="1"/>
        <end position="6"/>
    </location>
</feature>
<feature type="splice variant" id="VSP_017646" description="In isoform 2, isoform 3, isoform 4 and isoform 5." evidence="7 8 9">
    <original>ETSLLHPRLSRHPPPDCLECSHPVTQVRNMGFGDGFWRQRDLDSNPSPTTVNSLHFTVNSE</original>
    <variation>ILVNMDNNIIQHYSNHVAFLLDMGELDGKIQIILKEL</variation>
    <location>
        <begin position="566"/>
        <end position="626"/>
    </location>
</feature>
<feature type="sequence variant" id="VAR_027907" description="In dbSNP:rs2486668.">
    <original>D</original>
    <variation>E</variation>
    <location>
        <position position="55"/>
    </location>
</feature>
<feature type="sequence variant" id="VAR_055881" description="In dbSNP:rs34637004.">
    <original>V</original>
    <variation>A</variation>
    <location>
        <position position="160"/>
    </location>
</feature>
<feature type="sequence variant" id="VAR_072616" description="In VWS2; dbSNP:rs752673677." evidence="5">
    <original>R</original>
    <variation>H</variation>
    <location>
        <position position="298"/>
    </location>
</feature>
<feature type="sequence variant" id="VAR_072617" description="In VWS2; dbSNP:rs879255245." evidence="5">
    <original>R</original>
    <variation>C</variation>
    <location>
        <position position="391"/>
    </location>
</feature>
<feature type="sequence variant" id="VAR_072618" description="In VWS2; dbSNP:rs946439477." evidence="5">
    <original>R</original>
    <variation>Q</variation>
    <location>
        <position position="520"/>
    </location>
</feature>
<feature type="sequence conflict" description="In Ref. 2; BAB85067." evidence="10" ref="2">
    <original>L</original>
    <variation>S</variation>
    <location>
        <position position="20"/>
    </location>
</feature>
<feature type="sequence conflict" description="In Ref. 2; BAG37608." evidence="10" ref="2">
    <original>I</original>
    <variation>V</variation>
    <location>
        <position position="396"/>
    </location>
</feature>
<feature type="sequence conflict" description="In Ref. 2; BAB85067." evidence="10" ref="2">
    <original>K</original>
    <variation>R</variation>
    <location>
        <position position="533"/>
    </location>
</feature>
<keyword id="KW-0025">Alternative splicing</keyword>
<keyword id="KW-0238">DNA-binding</keyword>
<keyword id="KW-0539">Nucleus</keyword>
<keyword id="KW-1267">Proteomics identification</keyword>
<keyword id="KW-1185">Reference proteome</keyword>
<keyword id="KW-0804">Transcription</keyword>
<keyword id="KW-0805">Transcription regulation</keyword>
<proteinExistence type="evidence at protein level"/>
<sequence>MSNELDFRSVRLLKNDPVNLQKFSYTSEDEAWKTYLENPLTAATKAMMRVNGDDDSVAALSFLYDYYMGPKEKRILSSSTGGRNDQGKRYYHGMEYETDLTPLESPTHLMKFLTENVSGTPEYPDLLKKNNLMSLEGALPTPGKAAPLPAGPSKLEAGSVDSYLLPTTDMYDNGSLNSLFESIHGVPPTQRWQPDSTFKDDPQESMLFPDILKTSPEPPCPEDYPSLKSDFEYTLGSPKAIHIKSGESPMAYLNKGQFYPVTLRTPAGGKGLALSSNKVKSVVMVVFDNEKVPVEQLRFWKHWHSRQPTAKQRVIDVADCKENFNTVEHIEEVAYNALSFVWNVNEEAKVFIGVNCLSTDFSSQKGVKGVPLNLQIDTYDCGLGTERLVHRAVCQIKIFCDKGAERKMRDDERKQFRRKVKCPDSSNSGVKGCLLSGFRGNETTYLRPETDLETPPVLFIPNVHFSSLQRSGGAAPSAGPSSSNRLPLKRTCSPFTEEFEPLPSKQAKEGDLQRVLLYVRRETEEVFDALMLKTPDLKGLRNAISEKYGFPEENIYKVYKKCKRGETSLLHPRLSRHPPPDCLECSHPVTQVRNMGFGDGFWRQRDLDSNPSPTTVNSLHFTVNSE</sequence>
<evidence type="ECO:0000250" key="1">
    <source>
        <dbReference type="UniProtKB" id="Q5FWH3"/>
    </source>
</evidence>
<evidence type="ECO:0000255" key="2">
    <source>
        <dbReference type="PROSITE-ProRule" id="PRU01313"/>
    </source>
</evidence>
<evidence type="ECO:0000269" key="3">
    <source>
    </source>
</evidence>
<evidence type="ECO:0000269" key="4">
    <source>
    </source>
</evidence>
<evidence type="ECO:0000269" key="5">
    <source>
    </source>
</evidence>
<evidence type="ECO:0000269" key="6">
    <source>
    </source>
</evidence>
<evidence type="ECO:0000303" key="7">
    <source>
    </source>
</evidence>
<evidence type="ECO:0000303" key="8">
    <source>
    </source>
</evidence>
<evidence type="ECO:0000303" key="9">
    <source>
    </source>
</evidence>
<evidence type="ECO:0000305" key="10"/>
<evidence type="ECO:0000312" key="11">
    <source>
        <dbReference type="HGNC" id="HGNC:25839"/>
    </source>
</evidence>
<protein>
    <recommendedName>
        <fullName evidence="11">Grainyhead-like protein 3 homolog</fullName>
    </recommendedName>
    <alternativeName>
        <fullName>Sister of mammalian grainyhead</fullName>
    </alternativeName>
    <alternativeName>
        <fullName>Transcription factor CP2-like 4</fullName>
    </alternativeName>
</protein>
<reference key="1">
    <citation type="journal article" date="2003" name="Biochem. J.">
        <title>The identification and characterization of human sister-of-mammalian grainyhead (SOM) expands the grainyhead-like family of developmental transcription factors.</title>
        <authorList>
            <person name="Ting S.B."/>
            <person name="Wilanowski T."/>
            <person name="Cerruti L."/>
            <person name="Zhao L.L."/>
            <person name="Cunningham J.M."/>
            <person name="Jane S.M."/>
        </authorList>
    </citation>
    <scope>NUCLEOTIDE SEQUENCE [MRNA] (ISOFORMS 2 AND 4)</scope>
    <scope>FUNCTION</scope>
    <scope>TISSUE SPECIFICITY</scope>
    <scope>ALTERNATIVE SPLICING</scope>
    <scope>INTERACTION WITH GRHL1 AND GRHL2</scope>
    <source>
        <tissue>Testis</tissue>
    </source>
</reference>
<reference key="2">
    <citation type="journal article" date="2004" name="Nat. Genet.">
        <title>Complete sequencing and characterization of 21,243 full-length human cDNAs.</title>
        <authorList>
            <person name="Ota T."/>
            <person name="Suzuki Y."/>
            <person name="Nishikawa T."/>
            <person name="Otsuki T."/>
            <person name="Sugiyama T."/>
            <person name="Irie R."/>
            <person name="Wakamatsu A."/>
            <person name="Hayashi K."/>
            <person name="Sato H."/>
            <person name="Nagai K."/>
            <person name="Kimura K."/>
            <person name="Makita H."/>
            <person name="Sekine M."/>
            <person name="Obayashi M."/>
            <person name="Nishi T."/>
            <person name="Shibahara T."/>
            <person name="Tanaka T."/>
            <person name="Ishii S."/>
            <person name="Yamamoto J."/>
            <person name="Saito K."/>
            <person name="Kawai Y."/>
            <person name="Isono Y."/>
            <person name="Nakamura Y."/>
            <person name="Nagahari K."/>
            <person name="Murakami K."/>
            <person name="Yasuda T."/>
            <person name="Iwayanagi T."/>
            <person name="Wagatsuma M."/>
            <person name="Shiratori A."/>
            <person name="Sudo H."/>
            <person name="Hosoiri T."/>
            <person name="Kaku Y."/>
            <person name="Kodaira H."/>
            <person name="Kondo H."/>
            <person name="Sugawara M."/>
            <person name="Takahashi M."/>
            <person name="Kanda K."/>
            <person name="Yokoi T."/>
            <person name="Furuya T."/>
            <person name="Kikkawa E."/>
            <person name="Omura Y."/>
            <person name="Abe K."/>
            <person name="Kamihara K."/>
            <person name="Katsuta N."/>
            <person name="Sato K."/>
            <person name="Tanikawa M."/>
            <person name="Yamazaki M."/>
            <person name="Ninomiya K."/>
            <person name="Ishibashi T."/>
            <person name="Yamashita H."/>
            <person name="Murakawa K."/>
            <person name="Fujimori K."/>
            <person name="Tanai H."/>
            <person name="Kimata M."/>
            <person name="Watanabe M."/>
            <person name="Hiraoka S."/>
            <person name="Chiba Y."/>
            <person name="Ishida S."/>
            <person name="Ono Y."/>
            <person name="Takiguchi S."/>
            <person name="Watanabe S."/>
            <person name="Yosida M."/>
            <person name="Hotuta T."/>
            <person name="Kusano J."/>
            <person name="Kanehori K."/>
            <person name="Takahashi-Fujii A."/>
            <person name="Hara H."/>
            <person name="Tanase T.-O."/>
            <person name="Nomura Y."/>
            <person name="Togiya S."/>
            <person name="Komai F."/>
            <person name="Hara R."/>
            <person name="Takeuchi K."/>
            <person name="Arita M."/>
            <person name="Imose N."/>
            <person name="Musashino K."/>
            <person name="Yuuki H."/>
            <person name="Oshima A."/>
            <person name="Sasaki N."/>
            <person name="Aotsuka S."/>
            <person name="Yoshikawa Y."/>
            <person name="Matsunawa H."/>
            <person name="Ichihara T."/>
            <person name="Shiohata N."/>
            <person name="Sano S."/>
            <person name="Moriya S."/>
            <person name="Momiyama H."/>
            <person name="Satoh N."/>
            <person name="Takami S."/>
            <person name="Terashima Y."/>
            <person name="Suzuki O."/>
            <person name="Nakagawa S."/>
            <person name="Senoh A."/>
            <person name="Mizoguchi H."/>
            <person name="Goto Y."/>
            <person name="Shimizu F."/>
            <person name="Wakebe H."/>
            <person name="Hishigaki H."/>
            <person name="Watanabe T."/>
            <person name="Sugiyama A."/>
            <person name="Takemoto M."/>
            <person name="Kawakami B."/>
            <person name="Yamazaki M."/>
            <person name="Watanabe K."/>
            <person name="Kumagai A."/>
            <person name="Itakura S."/>
            <person name="Fukuzumi Y."/>
            <person name="Fujimori Y."/>
            <person name="Komiyama M."/>
            <person name="Tashiro H."/>
            <person name="Tanigami A."/>
            <person name="Fujiwara T."/>
            <person name="Ono T."/>
            <person name="Yamada K."/>
            <person name="Fujii Y."/>
            <person name="Ozaki K."/>
            <person name="Hirao M."/>
            <person name="Ohmori Y."/>
            <person name="Kawabata A."/>
            <person name="Hikiji T."/>
            <person name="Kobatake N."/>
            <person name="Inagaki H."/>
            <person name="Ikema Y."/>
            <person name="Okamoto S."/>
            <person name="Okitani R."/>
            <person name="Kawakami T."/>
            <person name="Noguchi S."/>
            <person name="Itoh T."/>
            <person name="Shigeta K."/>
            <person name="Senba T."/>
            <person name="Matsumura K."/>
            <person name="Nakajima Y."/>
            <person name="Mizuno T."/>
            <person name="Morinaga M."/>
            <person name="Sasaki M."/>
            <person name="Togashi T."/>
            <person name="Oyama M."/>
            <person name="Hata H."/>
            <person name="Watanabe M."/>
            <person name="Komatsu T."/>
            <person name="Mizushima-Sugano J."/>
            <person name="Satoh T."/>
            <person name="Shirai Y."/>
            <person name="Takahashi Y."/>
            <person name="Nakagawa K."/>
            <person name="Okumura K."/>
            <person name="Nagase T."/>
            <person name="Nomura N."/>
            <person name="Kikuchi H."/>
            <person name="Masuho Y."/>
            <person name="Yamashita R."/>
            <person name="Nakai K."/>
            <person name="Yada T."/>
            <person name="Nakamura Y."/>
            <person name="Ohara O."/>
            <person name="Isogai T."/>
            <person name="Sugano S."/>
        </authorList>
    </citation>
    <scope>NUCLEOTIDE SEQUENCE [LARGE SCALE MRNA] (ISOFORMS 1 AND 5)</scope>
    <source>
        <tissue>Kidney epithelium</tissue>
        <tissue>Tongue</tissue>
    </source>
</reference>
<reference key="3">
    <citation type="journal article" date="2006" name="Nature">
        <title>The DNA sequence and biological annotation of human chromosome 1.</title>
        <authorList>
            <person name="Gregory S.G."/>
            <person name="Barlow K.F."/>
            <person name="McLay K.E."/>
            <person name="Kaul R."/>
            <person name="Swarbreck D."/>
            <person name="Dunham A."/>
            <person name="Scott C.E."/>
            <person name="Howe K.L."/>
            <person name="Woodfine K."/>
            <person name="Spencer C.C.A."/>
            <person name="Jones M.C."/>
            <person name="Gillson C."/>
            <person name="Searle S."/>
            <person name="Zhou Y."/>
            <person name="Kokocinski F."/>
            <person name="McDonald L."/>
            <person name="Evans R."/>
            <person name="Phillips K."/>
            <person name="Atkinson A."/>
            <person name="Cooper R."/>
            <person name="Jones C."/>
            <person name="Hall R.E."/>
            <person name="Andrews T.D."/>
            <person name="Lloyd C."/>
            <person name="Ainscough R."/>
            <person name="Almeida J.P."/>
            <person name="Ambrose K.D."/>
            <person name="Anderson F."/>
            <person name="Andrew R.W."/>
            <person name="Ashwell R.I.S."/>
            <person name="Aubin K."/>
            <person name="Babbage A.K."/>
            <person name="Bagguley C.L."/>
            <person name="Bailey J."/>
            <person name="Beasley H."/>
            <person name="Bethel G."/>
            <person name="Bird C.P."/>
            <person name="Bray-Allen S."/>
            <person name="Brown J.Y."/>
            <person name="Brown A.J."/>
            <person name="Buckley D."/>
            <person name="Burton J."/>
            <person name="Bye J."/>
            <person name="Carder C."/>
            <person name="Chapman J.C."/>
            <person name="Clark S.Y."/>
            <person name="Clarke G."/>
            <person name="Clee C."/>
            <person name="Cobley V."/>
            <person name="Collier R.E."/>
            <person name="Corby N."/>
            <person name="Coville G.J."/>
            <person name="Davies J."/>
            <person name="Deadman R."/>
            <person name="Dunn M."/>
            <person name="Earthrowl M."/>
            <person name="Ellington A.G."/>
            <person name="Errington H."/>
            <person name="Frankish A."/>
            <person name="Frankland J."/>
            <person name="French L."/>
            <person name="Garner P."/>
            <person name="Garnett J."/>
            <person name="Gay L."/>
            <person name="Ghori M.R.J."/>
            <person name="Gibson R."/>
            <person name="Gilby L.M."/>
            <person name="Gillett W."/>
            <person name="Glithero R.J."/>
            <person name="Grafham D.V."/>
            <person name="Griffiths C."/>
            <person name="Griffiths-Jones S."/>
            <person name="Grocock R."/>
            <person name="Hammond S."/>
            <person name="Harrison E.S.I."/>
            <person name="Hart E."/>
            <person name="Haugen E."/>
            <person name="Heath P.D."/>
            <person name="Holmes S."/>
            <person name="Holt K."/>
            <person name="Howden P.J."/>
            <person name="Hunt A.R."/>
            <person name="Hunt S.E."/>
            <person name="Hunter G."/>
            <person name="Isherwood J."/>
            <person name="James R."/>
            <person name="Johnson C."/>
            <person name="Johnson D."/>
            <person name="Joy A."/>
            <person name="Kay M."/>
            <person name="Kershaw J.K."/>
            <person name="Kibukawa M."/>
            <person name="Kimberley A.M."/>
            <person name="King A."/>
            <person name="Knights A.J."/>
            <person name="Lad H."/>
            <person name="Laird G."/>
            <person name="Lawlor S."/>
            <person name="Leongamornlert D.A."/>
            <person name="Lloyd D.M."/>
            <person name="Loveland J."/>
            <person name="Lovell J."/>
            <person name="Lush M.J."/>
            <person name="Lyne R."/>
            <person name="Martin S."/>
            <person name="Mashreghi-Mohammadi M."/>
            <person name="Matthews L."/>
            <person name="Matthews N.S.W."/>
            <person name="McLaren S."/>
            <person name="Milne S."/>
            <person name="Mistry S."/>
            <person name="Moore M.J.F."/>
            <person name="Nickerson T."/>
            <person name="O'Dell C.N."/>
            <person name="Oliver K."/>
            <person name="Palmeiri A."/>
            <person name="Palmer S.A."/>
            <person name="Parker A."/>
            <person name="Patel D."/>
            <person name="Pearce A.V."/>
            <person name="Peck A.I."/>
            <person name="Pelan S."/>
            <person name="Phelps K."/>
            <person name="Phillimore B.J."/>
            <person name="Plumb R."/>
            <person name="Rajan J."/>
            <person name="Raymond C."/>
            <person name="Rouse G."/>
            <person name="Saenphimmachak C."/>
            <person name="Sehra H.K."/>
            <person name="Sheridan E."/>
            <person name="Shownkeen R."/>
            <person name="Sims S."/>
            <person name="Skuce C.D."/>
            <person name="Smith M."/>
            <person name="Steward C."/>
            <person name="Subramanian S."/>
            <person name="Sycamore N."/>
            <person name="Tracey A."/>
            <person name="Tromans A."/>
            <person name="Van Helmond Z."/>
            <person name="Wall M."/>
            <person name="Wallis J.M."/>
            <person name="White S."/>
            <person name="Whitehead S.L."/>
            <person name="Wilkinson J.E."/>
            <person name="Willey D.L."/>
            <person name="Williams H."/>
            <person name="Wilming L."/>
            <person name="Wray P.W."/>
            <person name="Wu Z."/>
            <person name="Coulson A."/>
            <person name="Vaudin M."/>
            <person name="Sulston J.E."/>
            <person name="Durbin R.M."/>
            <person name="Hubbard T."/>
            <person name="Wooster R."/>
            <person name="Dunham I."/>
            <person name="Carter N.P."/>
            <person name="McVean G."/>
            <person name="Ross M.T."/>
            <person name="Harrow J."/>
            <person name="Olson M.V."/>
            <person name="Beck S."/>
            <person name="Rogers J."/>
            <person name="Bentley D.R."/>
        </authorList>
    </citation>
    <scope>NUCLEOTIDE SEQUENCE [LARGE SCALE GENOMIC DNA]</scope>
</reference>
<reference key="4">
    <citation type="submission" date="2005-07" db="EMBL/GenBank/DDBJ databases">
        <authorList>
            <person name="Mural R.J."/>
            <person name="Istrail S."/>
            <person name="Sutton G."/>
            <person name="Florea L."/>
            <person name="Halpern A.L."/>
            <person name="Mobarry C.M."/>
            <person name="Lippert R."/>
            <person name="Walenz B."/>
            <person name="Shatkay H."/>
            <person name="Dew I."/>
            <person name="Miller J.R."/>
            <person name="Flanigan M.J."/>
            <person name="Edwards N.J."/>
            <person name="Bolanos R."/>
            <person name="Fasulo D."/>
            <person name="Halldorsson B.V."/>
            <person name="Hannenhalli S."/>
            <person name="Turner R."/>
            <person name="Yooseph S."/>
            <person name="Lu F."/>
            <person name="Nusskern D.R."/>
            <person name="Shue B.C."/>
            <person name="Zheng X.H."/>
            <person name="Zhong F."/>
            <person name="Delcher A.L."/>
            <person name="Huson D.H."/>
            <person name="Kravitz S.A."/>
            <person name="Mouchard L."/>
            <person name="Reinert K."/>
            <person name="Remington K.A."/>
            <person name="Clark A.G."/>
            <person name="Waterman M.S."/>
            <person name="Eichler E.E."/>
            <person name="Adams M.D."/>
            <person name="Hunkapiller M.W."/>
            <person name="Myers E.W."/>
            <person name="Venter J.C."/>
        </authorList>
    </citation>
    <scope>NUCLEOTIDE SEQUENCE [LARGE SCALE GENOMIC DNA]</scope>
</reference>
<reference key="5">
    <citation type="journal article" date="2004" name="Genome Res.">
        <title>The status, quality, and expansion of the NIH full-length cDNA project: the Mammalian Gene Collection (MGC).</title>
        <authorList>
            <consortium name="The MGC Project Team"/>
        </authorList>
    </citation>
    <scope>NUCLEOTIDE SEQUENCE [LARGE SCALE MRNA] (ISOFORM 3)</scope>
    <source>
        <tissue>Eye</tissue>
    </source>
</reference>
<reference key="6">
    <citation type="journal article" date="2011" name="Dev. Biol.">
        <title>The unique and cooperative roles of the Grainy head-like transcription factors in epidermal development reflect unexpected target gene specificity.</title>
        <authorList>
            <person name="Boglev Y."/>
            <person name="Wilanowski T."/>
            <person name="Caddy J."/>
            <person name="Parekh V."/>
            <person name="Auden A."/>
            <person name="Darido C."/>
            <person name="Hislop N.R."/>
            <person name="Cangkrama M."/>
            <person name="Ting S.B."/>
            <person name="Jane S.M."/>
        </authorList>
    </citation>
    <scope>FUNCTION</scope>
    <scope>SUBCELLULAR LOCATION</scope>
</reference>
<reference key="7">
    <citation type="journal article" date="2014" name="J. Clin. Invest.">
        <title>A GRHL3-regulated repair pathway suppresses immune-mediated epidermal hyperplasia.</title>
        <authorList>
            <person name="Gordon W.M."/>
            <person name="Zeller M.D."/>
            <person name="Klein R.H."/>
            <person name="Swindell W.R."/>
            <person name="Ho H."/>
            <person name="Espetia F."/>
            <person name="Gudjonsson J.E."/>
            <person name="Baldi P.F."/>
            <person name="Andersen B."/>
        </authorList>
    </citation>
    <scope>FUNCTION</scope>
</reference>
<reference key="8">
    <citation type="journal article" date="2014" name="Am. J. Hum. Genet.">
        <title>Dominant mutations in GRHL3 cause Van der Woude Syndrome and disrupt oral periderm development.</title>
        <authorList>
            <person name="Peyrard-Janvid M."/>
            <person name="Leslie E.J."/>
            <person name="Kousa Y.A."/>
            <person name="Smith T.L."/>
            <person name="Dunnwald M."/>
            <person name="Magnusson M."/>
            <person name="Lentz B.A."/>
            <person name="Unneberg P."/>
            <person name="Fransson I."/>
            <person name="Koillinen H.K."/>
            <person name="Rautio J."/>
            <person name="Pegelow M."/>
            <person name="Karsten A."/>
            <person name="Basel-Vanagaite L."/>
            <person name="Gordon W."/>
            <person name="Andersen B."/>
            <person name="Svensson T."/>
            <person name="Murray J.C."/>
            <person name="Cornell R.A."/>
            <person name="Kere J."/>
            <person name="Schutte B.C."/>
        </authorList>
    </citation>
    <scope>VARIANTS VWS2 HIS-298; CYS-391 AND GLN-520</scope>
    <scope>CHARACTERIZATION OF VARIANTS VWS2 HIS-298; CYS-391 AND GLN-520</scope>
    <scope>FUNCTION</scope>
</reference>
<dbReference type="EMBL" id="AY231160">
    <property type="protein sequence ID" value="AAO67370.1"/>
    <property type="molecule type" value="mRNA"/>
</dbReference>
<dbReference type="EMBL" id="AY231161">
    <property type="status" value="NOT_ANNOTATED_CDS"/>
    <property type="molecule type" value="mRNA"/>
</dbReference>
<dbReference type="EMBL" id="AK074386">
    <property type="protein sequence ID" value="BAB85067.1"/>
    <property type="molecule type" value="mRNA"/>
</dbReference>
<dbReference type="EMBL" id="AK315164">
    <property type="protein sequence ID" value="BAG37608.1"/>
    <property type="status" value="ALT_INIT"/>
    <property type="molecule type" value="mRNA"/>
</dbReference>
<dbReference type="EMBL" id="AL031431">
    <property type="status" value="NOT_ANNOTATED_CDS"/>
    <property type="molecule type" value="Genomic_DNA"/>
</dbReference>
<dbReference type="EMBL" id="AL138902">
    <property type="status" value="NOT_ANNOTATED_CDS"/>
    <property type="molecule type" value="Genomic_DNA"/>
</dbReference>
<dbReference type="EMBL" id="CH471134">
    <property type="protein sequence ID" value="EAW95121.1"/>
    <property type="molecule type" value="Genomic_DNA"/>
</dbReference>
<dbReference type="EMBL" id="BC036890">
    <property type="protein sequence ID" value="AAH36890.1"/>
    <property type="status" value="ALT_INIT"/>
    <property type="molecule type" value="mRNA"/>
</dbReference>
<dbReference type="CCDS" id="CCDS251.1">
    <molecule id="Q8TE85-2"/>
</dbReference>
<dbReference type="CCDS" id="CCDS252.2">
    <molecule id="Q8TE85-1"/>
</dbReference>
<dbReference type="CCDS" id="CCDS44088.1">
    <molecule id="Q8TE85-5"/>
</dbReference>
<dbReference type="CCDS" id="CCDS53284.1">
    <molecule id="Q8TE85-3"/>
</dbReference>
<dbReference type="RefSeq" id="NP_001181939.1">
    <molecule id="Q8TE85-3"/>
    <property type="nucleotide sequence ID" value="NM_001195010.2"/>
</dbReference>
<dbReference type="RefSeq" id="NP_067003.2">
    <molecule id="Q8TE85-2"/>
    <property type="nucleotide sequence ID" value="NM_021180.3"/>
</dbReference>
<dbReference type="RefSeq" id="NP_937816.1">
    <molecule id="Q8TE85-5"/>
    <property type="nucleotide sequence ID" value="NM_198173.3"/>
</dbReference>
<dbReference type="RefSeq" id="NP_937817.3">
    <molecule id="Q8TE85-1"/>
    <property type="nucleotide sequence ID" value="NM_198174.2"/>
</dbReference>
<dbReference type="RefSeq" id="XP_011540171.1">
    <molecule id="Q8TE85-3"/>
    <property type="nucleotide sequence ID" value="XM_011541869.2"/>
</dbReference>
<dbReference type="RefSeq" id="XP_011540172.1">
    <molecule id="Q8TE85-4"/>
    <property type="nucleotide sequence ID" value="XM_011541870.3"/>
</dbReference>
<dbReference type="RefSeq" id="XP_054193909.1">
    <molecule id="Q8TE85-3"/>
    <property type="nucleotide sequence ID" value="XM_054337934.1"/>
</dbReference>
<dbReference type="RefSeq" id="XP_054193910.1">
    <molecule id="Q8TE85-4"/>
    <property type="nucleotide sequence ID" value="XM_054337935.1"/>
</dbReference>
<dbReference type="SMR" id="Q8TE85"/>
<dbReference type="BioGRID" id="121781">
    <property type="interactions" value="10"/>
</dbReference>
<dbReference type="FunCoup" id="Q8TE85">
    <property type="interactions" value="1332"/>
</dbReference>
<dbReference type="IntAct" id="Q8TE85">
    <property type="interactions" value="8"/>
</dbReference>
<dbReference type="MINT" id="Q8TE85"/>
<dbReference type="STRING" id="9606.ENSP00000288955"/>
<dbReference type="GlyGen" id="Q8TE85">
    <property type="glycosylation" value="1 site"/>
</dbReference>
<dbReference type="iPTMnet" id="Q8TE85"/>
<dbReference type="PhosphoSitePlus" id="Q8TE85"/>
<dbReference type="BioMuta" id="GRHL3"/>
<dbReference type="DMDM" id="116242504"/>
<dbReference type="jPOST" id="Q8TE85"/>
<dbReference type="MassIVE" id="Q8TE85"/>
<dbReference type="PaxDb" id="9606-ENSP00000288955"/>
<dbReference type="PeptideAtlas" id="Q8TE85"/>
<dbReference type="ProteomicsDB" id="182"/>
<dbReference type="ProteomicsDB" id="33731"/>
<dbReference type="ProteomicsDB" id="74420">
    <molecule id="Q8TE85-1"/>
</dbReference>
<dbReference type="ProteomicsDB" id="74421">
    <molecule id="Q8TE85-2"/>
</dbReference>
<dbReference type="ProteomicsDB" id="74422">
    <molecule id="Q8TE85-3"/>
</dbReference>
<dbReference type="ProteomicsDB" id="74423">
    <molecule id="Q8TE85-4"/>
</dbReference>
<dbReference type="Antibodypedia" id="15710">
    <property type="antibodies" value="181 antibodies from 21 providers"/>
</dbReference>
<dbReference type="DNASU" id="57822"/>
<dbReference type="Ensembl" id="ENST00000236255.4">
    <molecule id="Q8TE85-2"/>
    <property type="protein sequence ID" value="ENSP00000236255.4"/>
    <property type="gene ID" value="ENSG00000158055.17"/>
</dbReference>
<dbReference type="Ensembl" id="ENST00000350501.9">
    <molecule id="Q8TE85-1"/>
    <property type="protein sequence ID" value="ENSP00000288955.5"/>
    <property type="gene ID" value="ENSG00000158055.17"/>
</dbReference>
<dbReference type="Ensembl" id="ENST00000356046.6">
    <molecule id="Q8TE85-3"/>
    <property type="protein sequence ID" value="ENSP00000348333.2"/>
    <property type="gene ID" value="ENSG00000158055.17"/>
</dbReference>
<dbReference type="Ensembl" id="ENST00000361548.9">
    <molecule id="Q8TE85-5"/>
    <property type="protein sequence ID" value="ENSP00000354943.5"/>
    <property type="gene ID" value="ENSG00000158055.17"/>
</dbReference>
<dbReference type="Ensembl" id="ENST00000524724.6">
    <molecule id="Q8TE85-3"/>
    <property type="protein sequence ID" value="ENSP00000431290.2"/>
    <property type="gene ID" value="ENSG00000158055.17"/>
</dbReference>
<dbReference type="Ensembl" id="ENST00000528064.6">
    <molecule id="Q8TE85-4"/>
    <property type="protein sequence ID" value="ENSP00000435130.2"/>
    <property type="gene ID" value="ENSG00000158055.17"/>
</dbReference>
<dbReference type="Ensembl" id="ENST00000689444.1">
    <molecule id="Q8TE85-3"/>
    <property type="protein sequence ID" value="ENSP00000509040.1"/>
    <property type="gene ID" value="ENSG00000158055.17"/>
</dbReference>
<dbReference type="Ensembl" id="ENST00000690803.1">
    <molecule id="Q8TE85-4"/>
    <property type="protein sequence ID" value="ENSP00000510783.1"/>
    <property type="gene ID" value="ENSG00000158055.17"/>
</dbReference>
<dbReference type="Ensembl" id="ENST00000692334.1">
    <molecule id="Q8TE85-4"/>
    <property type="protein sequence ID" value="ENSP00000509790.1"/>
    <property type="gene ID" value="ENSG00000158055.17"/>
</dbReference>
<dbReference type="GeneID" id="57822"/>
<dbReference type="KEGG" id="hsa:57822"/>
<dbReference type="MANE-Select" id="ENST00000361548.9">
    <molecule id="Q8TE85-5"/>
    <property type="protein sequence ID" value="ENSP00000354943.5"/>
    <property type="RefSeq nucleotide sequence ID" value="NM_198173.3"/>
    <property type="RefSeq protein sequence ID" value="NP_937816.1"/>
</dbReference>
<dbReference type="UCSC" id="uc001bix.3">
    <molecule id="Q8TE85-1"/>
    <property type="organism name" value="human"/>
</dbReference>
<dbReference type="AGR" id="HGNC:25839"/>
<dbReference type="CTD" id="57822"/>
<dbReference type="DisGeNET" id="57822"/>
<dbReference type="GeneCards" id="GRHL3"/>
<dbReference type="HGNC" id="HGNC:25839">
    <property type="gene designation" value="GRHL3"/>
</dbReference>
<dbReference type="HPA" id="ENSG00000158055">
    <property type="expression patterns" value="Tissue enhanced (esophagus, skin, vagina)"/>
</dbReference>
<dbReference type="MalaCards" id="GRHL3"/>
<dbReference type="MIM" id="606713">
    <property type="type" value="phenotype"/>
</dbReference>
<dbReference type="MIM" id="608317">
    <property type="type" value="gene"/>
</dbReference>
<dbReference type="neXtProt" id="NX_Q8TE85"/>
<dbReference type="OpenTargets" id="ENSG00000158055"/>
<dbReference type="Orphanet" id="99771">
    <property type="disease" value="Bifid uvula"/>
</dbReference>
<dbReference type="Orphanet" id="101023">
    <property type="disease" value="Cleft hard palate"/>
</dbReference>
<dbReference type="Orphanet" id="99772">
    <property type="disease" value="Cleft velum"/>
</dbReference>
<dbReference type="Orphanet" id="155878">
    <property type="disease" value="Submucosal cleft palate"/>
</dbReference>
<dbReference type="Orphanet" id="888">
    <property type="disease" value="Van der Woude syndrome"/>
</dbReference>
<dbReference type="PharmGKB" id="PA134987320"/>
<dbReference type="VEuPathDB" id="HostDB:ENSG00000158055"/>
<dbReference type="eggNOG" id="KOG4091">
    <property type="taxonomic scope" value="Eukaryota"/>
</dbReference>
<dbReference type="GeneTree" id="ENSGT00940000157970"/>
<dbReference type="HOGENOM" id="CLU_021156_1_1_1"/>
<dbReference type="InParanoid" id="Q8TE85"/>
<dbReference type="OMA" id="MDSWSYL"/>
<dbReference type="OrthoDB" id="7680836at2759"/>
<dbReference type="PAN-GO" id="Q8TE85">
    <property type="GO annotations" value="4 GO annotations based on evolutionary models"/>
</dbReference>
<dbReference type="PhylomeDB" id="Q8TE85"/>
<dbReference type="TreeFam" id="TF314132"/>
<dbReference type="PathwayCommons" id="Q8TE85"/>
<dbReference type="SignaLink" id="Q8TE85"/>
<dbReference type="BioGRID-ORCS" id="57822">
    <property type="hits" value="16 hits in 1176 CRISPR screens"/>
</dbReference>
<dbReference type="ChiTaRS" id="GRHL3">
    <property type="organism name" value="human"/>
</dbReference>
<dbReference type="GenomeRNAi" id="57822"/>
<dbReference type="Pharos" id="Q8TE85">
    <property type="development level" value="Tbio"/>
</dbReference>
<dbReference type="PRO" id="PR:Q8TE85"/>
<dbReference type="Proteomes" id="UP000005640">
    <property type="component" value="Chromosome 1"/>
</dbReference>
<dbReference type="RNAct" id="Q8TE85">
    <property type="molecule type" value="protein"/>
</dbReference>
<dbReference type="Bgee" id="ENSG00000158055">
    <property type="expression patterns" value="Expressed in lower esophagus mucosa and 109 other cell types or tissues"/>
</dbReference>
<dbReference type="ExpressionAtlas" id="Q8TE85">
    <property type="expression patterns" value="baseline and differential"/>
</dbReference>
<dbReference type="GO" id="GO:0015629">
    <property type="term" value="C:actin cytoskeleton"/>
    <property type="evidence" value="ECO:0000314"/>
    <property type="project" value="HPA"/>
</dbReference>
<dbReference type="GO" id="GO:0000785">
    <property type="term" value="C:chromatin"/>
    <property type="evidence" value="ECO:0000247"/>
    <property type="project" value="NTNU_SB"/>
</dbReference>
<dbReference type="GO" id="GO:0005929">
    <property type="term" value="C:cilium"/>
    <property type="evidence" value="ECO:0000314"/>
    <property type="project" value="HPA"/>
</dbReference>
<dbReference type="GO" id="GO:0005829">
    <property type="term" value="C:cytosol"/>
    <property type="evidence" value="ECO:0000314"/>
    <property type="project" value="HPA"/>
</dbReference>
<dbReference type="GO" id="GO:0005654">
    <property type="term" value="C:nucleoplasm"/>
    <property type="evidence" value="ECO:0000314"/>
    <property type="project" value="HPA"/>
</dbReference>
<dbReference type="GO" id="GO:0005634">
    <property type="term" value="C:nucleus"/>
    <property type="evidence" value="ECO:0000314"/>
    <property type="project" value="UniProtKB"/>
</dbReference>
<dbReference type="GO" id="GO:0031490">
    <property type="term" value="F:chromatin DNA binding"/>
    <property type="evidence" value="ECO:0000314"/>
    <property type="project" value="UniProtKB"/>
</dbReference>
<dbReference type="GO" id="GO:0001228">
    <property type="term" value="F:DNA-binding transcription activator activity, RNA polymerase II-specific"/>
    <property type="evidence" value="ECO:0000314"/>
    <property type="project" value="HGNC"/>
</dbReference>
<dbReference type="GO" id="GO:0000981">
    <property type="term" value="F:DNA-binding transcription factor activity, RNA polymerase II-specific"/>
    <property type="evidence" value="ECO:0000247"/>
    <property type="project" value="NTNU_SB"/>
</dbReference>
<dbReference type="GO" id="GO:0000978">
    <property type="term" value="F:RNA polymerase II cis-regulatory region sequence-specific DNA binding"/>
    <property type="evidence" value="ECO:0000318"/>
    <property type="project" value="GO_Central"/>
</dbReference>
<dbReference type="GO" id="GO:0043565">
    <property type="term" value="F:sequence-specific DNA binding"/>
    <property type="evidence" value="ECO:0000250"/>
    <property type="project" value="UniProtKB"/>
</dbReference>
<dbReference type="GO" id="GO:0007417">
    <property type="term" value="P:central nervous system development"/>
    <property type="evidence" value="ECO:0007669"/>
    <property type="project" value="Ensembl"/>
</dbReference>
<dbReference type="GO" id="GO:0090103">
    <property type="term" value="P:cochlea morphogenesis"/>
    <property type="evidence" value="ECO:0007669"/>
    <property type="project" value="Ensembl"/>
</dbReference>
<dbReference type="GO" id="GO:0007398">
    <property type="term" value="P:ectoderm development"/>
    <property type="evidence" value="ECO:0007669"/>
    <property type="project" value="Ensembl"/>
</dbReference>
<dbReference type="GO" id="GO:0008544">
    <property type="term" value="P:epidermis development"/>
    <property type="evidence" value="ECO:0000250"/>
    <property type="project" value="UniProtKB"/>
</dbReference>
<dbReference type="GO" id="GO:0001736">
    <property type="term" value="P:establishment of planar polarity"/>
    <property type="evidence" value="ECO:0007669"/>
    <property type="project" value="Ensembl"/>
</dbReference>
<dbReference type="GO" id="GO:0061436">
    <property type="term" value="P:establishment of skin barrier"/>
    <property type="evidence" value="ECO:0007669"/>
    <property type="project" value="Ensembl"/>
</dbReference>
<dbReference type="GO" id="GO:0061029">
    <property type="term" value="P:eyelid development in camera-type eye"/>
    <property type="evidence" value="ECO:0007669"/>
    <property type="project" value="Ensembl"/>
</dbReference>
<dbReference type="GO" id="GO:0001843">
    <property type="term" value="P:neural tube closure"/>
    <property type="evidence" value="ECO:0000250"/>
    <property type="project" value="UniProtKB"/>
</dbReference>
<dbReference type="GO" id="GO:0007389">
    <property type="term" value="P:pattern specification process"/>
    <property type="evidence" value="ECO:0007669"/>
    <property type="project" value="Ensembl"/>
</dbReference>
<dbReference type="GO" id="GO:0010628">
    <property type="term" value="P:positive regulation of gene expression"/>
    <property type="evidence" value="ECO:0007669"/>
    <property type="project" value="Ensembl"/>
</dbReference>
<dbReference type="GO" id="GO:0045944">
    <property type="term" value="P:positive regulation of transcription by RNA polymerase II"/>
    <property type="evidence" value="ECO:0000314"/>
    <property type="project" value="HGNC"/>
</dbReference>
<dbReference type="GO" id="GO:0032956">
    <property type="term" value="P:regulation of actin cytoskeleton organization"/>
    <property type="evidence" value="ECO:0000316"/>
    <property type="project" value="MGI"/>
</dbReference>
<dbReference type="GO" id="GO:0006357">
    <property type="term" value="P:regulation of transcription by RNA polymerase II"/>
    <property type="evidence" value="ECO:0000318"/>
    <property type="project" value="GO_Central"/>
</dbReference>
<dbReference type="GO" id="GO:0006366">
    <property type="term" value="P:transcription by RNA polymerase II"/>
    <property type="evidence" value="ECO:0007669"/>
    <property type="project" value="Ensembl"/>
</dbReference>
<dbReference type="GO" id="GO:0042060">
    <property type="term" value="P:wound healing"/>
    <property type="evidence" value="ECO:0007669"/>
    <property type="project" value="Ensembl"/>
</dbReference>
<dbReference type="InterPro" id="IPR007604">
    <property type="entry name" value="CP2"/>
</dbReference>
<dbReference type="InterPro" id="IPR040167">
    <property type="entry name" value="TF_CP2-like"/>
</dbReference>
<dbReference type="PANTHER" id="PTHR11037:SF6">
    <property type="entry name" value="GRAINYHEAD-LIKE PROTEIN 3 HOMOLOG"/>
    <property type="match status" value="1"/>
</dbReference>
<dbReference type="PANTHER" id="PTHR11037">
    <property type="entry name" value="TRANSCRIPTION FACTOR CP2"/>
    <property type="match status" value="1"/>
</dbReference>
<dbReference type="Pfam" id="PF04516">
    <property type="entry name" value="CP2"/>
    <property type="match status" value="1"/>
</dbReference>
<dbReference type="Pfam" id="PF25416">
    <property type="entry name" value="GRHL1_C"/>
    <property type="match status" value="1"/>
</dbReference>
<dbReference type="PROSITE" id="PS51968">
    <property type="entry name" value="GRH_CP2_DB"/>
    <property type="match status" value="1"/>
</dbReference>
<gene>
    <name evidence="11" type="primary">GRHL3</name>
    <name type="synonym">SOM</name>
    <name evidence="11" type="synonym">TFCP2L4</name>
</gene>
<accession>Q8TE85</accession>
<accession>A2A297</accession>
<accession>B2RCL1</accession>
<accession>G3XAF0</accession>
<accession>Q5TH78</accession>
<accession>Q86Y06</accession>
<accession>Q8N407</accession>